<name>FRDD_SALPB</name>
<proteinExistence type="inferred from homology"/>
<evidence type="ECO:0000255" key="1">
    <source>
        <dbReference type="HAMAP-Rule" id="MF_00709"/>
    </source>
</evidence>
<dbReference type="EMBL" id="CP000886">
    <property type="protein sequence ID" value="ABX70743.1"/>
    <property type="molecule type" value="Genomic_DNA"/>
</dbReference>
<dbReference type="RefSeq" id="WP_000609650.1">
    <property type="nucleotide sequence ID" value="NC_010102.1"/>
</dbReference>
<dbReference type="SMR" id="A9N409"/>
<dbReference type="KEGG" id="spq:SPAB_05471"/>
<dbReference type="PATRIC" id="fig|1016998.12.peg.5129"/>
<dbReference type="HOGENOM" id="CLU_168367_0_0_6"/>
<dbReference type="BioCyc" id="SENT1016998:SPAB_RS22310-MONOMER"/>
<dbReference type="Proteomes" id="UP000008556">
    <property type="component" value="Chromosome"/>
</dbReference>
<dbReference type="GO" id="GO:0045283">
    <property type="term" value="C:fumarate reductase complex"/>
    <property type="evidence" value="ECO:0007669"/>
    <property type="project" value="UniProtKB-UniRule"/>
</dbReference>
<dbReference type="GO" id="GO:0005886">
    <property type="term" value="C:plasma membrane"/>
    <property type="evidence" value="ECO:0007669"/>
    <property type="project" value="UniProtKB-SubCell"/>
</dbReference>
<dbReference type="GO" id="GO:0000104">
    <property type="term" value="F:succinate dehydrogenase activity"/>
    <property type="evidence" value="ECO:0007669"/>
    <property type="project" value="UniProtKB-UniRule"/>
</dbReference>
<dbReference type="GO" id="GO:0006106">
    <property type="term" value="P:fumarate metabolic process"/>
    <property type="evidence" value="ECO:0007669"/>
    <property type="project" value="InterPro"/>
</dbReference>
<dbReference type="CDD" id="cd00547">
    <property type="entry name" value="QFR_TypeD_subunitD"/>
    <property type="match status" value="1"/>
</dbReference>
<dbReference type="FunFam" id="1.20.1300.10:FF:000002">
    <property type="entry name" value="Fumarate reductase subunit D"/>
    <property type="match status" value="1"/>
</dbReference>
<dbReference type="Gene3D" id="1.20.1300.10">
    <property type="entry name" value="Fumarate reductase/succinate dehydrogenase, transmembrane subunit"/>
    <property type="match status" value="1"/>
</dbReference>
<dbReference type="HAMAP" id="MF_00709">
    <property type="entry name" value="Fumarate_red_D"/>
    <property type="match status" value="1"/>
</dbReference>
<dbReference type="InterPro" id="IPR003418">
    <property type="entry name" value="Fumarate_red_D"/>
</dbReference>
<dbReference type="InterPro" id="IPR034804">
    <property type="entry name" value="SQR/QFR_C/D"/>
</dbReference>
<dbReference type="NCBIfam" id="NF003977">
    <property type="entry name" value="PRK05470.1-1"/>
    <property type="match status" value="1"/>
</dbReference>
<dbReference type="Pfam" id="PF02313">
    <property type="entry name" value="Fumarate_red_D"/>
    <property type="match status" value="1"/>
</dbReference>
<dbReference type="PIRSF" id="PIRSF000179">
    <property type="entry name" value="FrdD"/>
    <property type="match status" value="1"/>
</dbReference>
<dbReference type="SUPFAM" id="SSF81343">
    <property type="entry name" value="Fumarate reductase respiratory complex transmembrane subunits"/>
    <property type="match status" value="1"/>
</dbReference>
<reference key="1">
    <citation type="submission" date="2007-11" db="EMBL/GenBank/DDBJ databases">
        <authorList>
            <consortium name="The Salmonella enterica serovar Paratyphi B Genome Sequencing Project"/>
            <person name="McClelland M."/>
            <person name="Sanderson E.K."/>
            <person name="Porwollik S."/>
            <person name="Spieth J."/>
            <person name="Clifton W.S."/>
            <person name="Fulton R."/>
            <person name="Cordes M."/>
            <person name="Wollam A."/>
            <person name="Shah N."/>
            <person name="Pepin K."/>
            <person name="Bhonagiri V."/>
            <person name="Nash W."/>
            <person name="Johnson M."/>
            <person name="Thiruvilangam P."/>
            <person name="Wilson R."/>
        </authorList>
    </citation>
    <scope>NUCLEOTIDE SEQUENCE [LARGE SCALE GENOMIC DNA]</scope>
    <source>
        <strain>ATCC BAA-1250 / SPB7</strain>
    </source>
</reference>
<feature type="chain" id="PRO_1000083201" description="Fumarate reductase subunit D">
    <location>
        <begin position="1"/>
        <end position="119"/>
    </location>
</feature>
<feature type="transmembrane region" description="Helical" evidence="1">
    <location>
        <begin position="25"/>
        <end position="45"/>
    </location>
</feature>
<feature type="transmembrane region" description="Helical" evidence="1">
    <location>
        <begin position="61"/>
        <end position="81"/>
    </location>
</feature>
<feature type="transmembrane region" description="Helical" evidence="1">
    <location>
        <begin position="99"/>
        <end position="119"/>
    </location>
</feature>
<accession>A9N409</accession>
<sequence>MINPNPKRSDEPVFWGLFGAGGMWGAIIAPVIVLLVGIMLPLGLFPGDALSFERVLTFAQSFIGRVFLFLMIVLPLWCGLHRMHHAMHDLKIHVPAGKWVFYGLAAILTVVTAIGVITL</sequence>
<protein>
    <recommendedName>
        <fullName evidence="1">Fumarate reductase subunit D</fullName>
    </recommendedName>
    <alternativeName>
        <fullName evidence="1">Fumarate reductase 13 kDa hydrophobic protein</fullName>
    </alternativeName>
    <alternativeName>
        <fullName evidence="1">Quinol-fumarate reductase subunit D</fullName>
        <shortName evidence="1">QFR subunit D</shortName>
    </alternativeName>
</protein>
<organism>
    <name type="scientific">Salmonella paratyphi B (strain ATCC BAA-1250 / SPB7)</name>
    <dbReference type="NCBI Taxonomy" id="1016998"/>
    <lineage>
        <taxon>Bacteria</taxon>
        <taxon>Pseudomonadati</taxon>
        <taxon>Pseudomonadota</taxon>
        <taxon>Gammaproteobacteria</taxon>
        <taxon>Enterobacterales</taxon>
        <taxon>Enterobacteriaceae</taxon>
        <taxon>Salmonella</taxon>
    </lineage>
</organism>
<comment type="function">
    <text evidence="1">Two distinct, membrane-bound, FAD-containing enzymes are responsible for the catalysis of fumarate and succinate interconversion; fumarate reductase is used in anaerobic growth, and succinate dehydrogenase is used in aerobic growth. Anchors the catalytic components of the fumarate reductase complex to the cell inner membrane, binds quinones.</text>
</comment>
<comment type="subunit">
    <text evidence="1">Part of an enzyme complex containing four subunits: a flavoprotein (FrdA), an iron-sulfur protein (FrdB), and two hydrophobic anchor proteins (FrdC and FrdD).</text>
</comment>
<comment type="subcellular location">
    <subcellularLocation>
        <location evidence="1">Cell inner membrane</location>
        <topology evidence="1">Multi-pass membrane protein</topology>
    </subcellularLocation>
</comment>
<comment type="similarity">
    <text evidence="1">Belongs to the FrdD family.</text>
</comment>
<keyword id="KW-0997">Cell inner membrane</keyword>
<keyword id="KW-1003">Cell membrane</keyword>
<keyword id="KW-0472">Membrane</keyword>
<keyword id="KW-0812">Transmembrane</keyword>
<keyword id="KW-1133">Transmembrane helix</keyword>
<gene>
    <name evidence="1" type="primary">frdD</name>
    <name type="ordered locus">SPAB_05471</name>
</gene>